<evidence type="ECO:0000255" key="1">
    <source>
        <dbReference type="HAMAP-Rule" id="MF_04034"/>
    </source>
</evidence>
<evidence type="ECO:0000255" key="2">
    <source>
        <dbReference type="PROSITE-ProRule" id="PRU01368"/>
    </source>
</evidence>
<sequence>MKIYRVLVHLSFVLGMFTKTNTVLAWSKYDLVHGFMRVANISSIMRLDCLPNLLSSNAGYAALPSDDIPTGIFIKVNCSIPEFILWYEQKAMAAWINPIMGTVLMMNDVLKSGLENSVKVGLLTFLKRIAEKGPNGPLRNRGSGCINLIAPADISCYGSTRLDRFNRDFEDDSRGMPCRAKAMRRTTSGSRRANA</sequence>
<protein>
    <recommendedName>
        <fullName evidence="1">Envelope glycoprotein L</fullName>
        <shortName evidence="1">gL</shortName>
    </recommendedName>
</protein>
<dbReference type="EMBL" id="U04994">
    <property type="protein sequence ID" value="AAA61506.1"/>
    <property type="molecule type" value="Genomic_DNA"/>
</dbReference>
<dbReference type="KEGG" id="vg:4811474"/>
<dbReference type="GO" id="GO:0044177">
    <property type="term" value="C:host cell Golgi apparatus"/>
    <property type="evidence" value="ECO:0007669"/>
    <property type="project" value="UniProtKB-SubCell"/>
</dbReference>
<dbReference type="GO" id="GO:0020002">
    <property type="term" value="C:host cell plasma membrane"/>
    <property type="evidence" value="ECO:0007669"/>
    <property type="project" value="UniProtKB-SubCell"/>
</dbReference>
<dbReference type="GO" id="GO:0016020">
    <property type="term" value="C:membrane"/>
    <property type="evidence" value="ECO:0007669"/>
    <property type="project" value="UniProtKB-KW"/>
</dbReference>
<dbReference type="GO" id="GO:0019031">
    <property type="term" value="C:viral envelope"/>
    <property type="evidence" value="ECO:0007669"/>
    <property type="project" value="UniProtKB-KW"/>
</dbReference>
<dbReference type="GO" id="GO:0055036">
    <property type="term" value="C:virion membrane"/>
    <property type="evidence" value="ECO:0007669"/>
    <property type="project" value="UniProtKB-SubCell"/>
</dbReference>
<dbReference type="GO" id="GO:0019064">
    <property type="term" value="P:fusion of virus membrane with host plasma membrane"/>
    <property type="evidence" value="ECO:0007669"/>
    <property type="project" value="UniProtKB-KW"/>
</dbReference>
<dbReference type="GO" id="GO:0046718">
    <property type="term" value="P:symbiont entry into host cell"/>
    <property type="evidence" value="ECO:0007669"/>
    <property type="project" value="UniProtKB-KW"/>
</dbReference>
<dbReference type="Gene3D" id="3.30.390.170">
    <property type="match status" value="1"/>
</dbReference>
<dbReference type="HAMAP" id="MF_04034">
    <property type="entry name" value="HSV_GL_alphagamma"/>
    <property type="match status" value="1"/>
</dbReference>
<dbReference type="InterPro" id="IPR022200">
    <property type="entry name" value="Herpes_gL_C"/>
</dbReference>
<dbReference type="InterPro" id="IPR007923">
    <property type="entry name" value="Herpes_gL_N"/>
</dbReference>
<dbReference type="InterPro" id="IPR038311">
    <property type="entry name" value="Herpes_gL_N_sf"/>
</dbReference>
<dbReference type="InterPro" id="IPR034708">
    <property type="entry name" value="HSV_GL_alphagamma"/>
</dbReference>
<dbReference type="Pfam" id="PF12524">
    <property type="entry name" value="GlyL_C"/>
    <property type="match status" value="1"/>
</dbReference>
<dbReference type="Pfam" id="PF05259">
    <property type="entry name" value="Herpes_UL1"/>
    <property type="match status" value="1"/>
</dbReference>
<dbReference type="PROSITE" id="PS52024">
    <property type="entry name" value="GL_AHV"/>
    <property type="match status" value="1"/>
</dbReference>
<accession>P52510</accession>
<feature type="signal peptide" evidence="1">
    <location>
        <begin position="1"/>
        <end position="25"/>
    </location>
</feature>
<feature type="chain" id="PRO_0000038271" description="Envelope glycoprotein L" evidence="1">
    <location>
        <begin position="26"/>
        <end position="195"/>
    </location>
</feature>
<feature type="domain" description="gL alphaherpesvirus-type" evidence="2">
    <location>
        <begin position="28"/>
        <end position="195"/>
    </location>
</feature>
<feature type="region of interest" description="Interaction with gH" evidence="1">
    <location>
        <begin position="28"/>
        <end position="157"/>
    </location>
</feature>
<feature type="disulfide bond" evidence="2">
    <location>
        <begin position="49"/>
        <end position="78"/>
    </location>
</feature>
<feature type="disulfide bond" evidence="2">
    <location>
        <begin position="156"/>
        <end position="178"/>
    </location>
</feature>
<keyword id="KW-1015">Disulfide bond</keyword>
<keyword id="KW-1169">Fusion of virus membrane with host cell membrane</keyword>
<keyword id="KW-1168">Fusion of virus membrane with host membrane</keyword>
<keyword id="KW-0325">Glycoprotein</keyword>
<keyword id="KW-1032">Host cell membrane</keyword>
<keyword id="KW-1040">Host Golgi apparatus</keyword>
<keyword id="KW-1043">Host membrane</keyword>
<keyword id="KW-0472">Membrane</keyword>
<keyword id="KW-0732">Signal</keyword>
<keyword id="KW-0261">Viral envelope protein</keyword>
<keyword id="KW-1162">Viral penetration into host cytoplasm</keyword>
<keyword id="KW-0946">Virion</keyword>
<keyword id="KW-1160">Virus entry into host cell</keyword>
<reference key="1">
    <citation type="journal article" date="1994" name="Virology">
        <title>Identification and characterization of a Marek's disease virus gene homologous to glycoprotein L of herpes simplex virus.</title>
        <authorList>
            <person name="Yoshida S."/>
            <person name="Lee L.F."/>
            <person name="Yanagida N."/>
            <person name="Nazerian K."/>
        </authorList>
    </citation>
    <scope>NUCLEOTIDE SEQUENCE [GENOMIC DNA]</scope>
</reference>
<proteinExistence type="inferred from homology"/>
<organismHost>
    <name type="scientific">Gallus gallus</name>
    <name type="common">Chicken</name>
    <dbReference type="NCBI Taxonomy" id="9031"/>
</organismHost>
<gene>
    <name evidence="1" type="primary">gL</name>
</gene>
<organism>
    <name type="scientific">Gallid herpesvirus 2 (strain GA)</name>
    <name type="common">GaHV-2</name>
    <name type="synonym">Marek's disease herpesvirus type 1</name>
    <dbReference type="NCBI Taxonomy" id="10388"/>
    <lineage>
        <taxon>Viruses</taxon>
        <taxon>Duplodnaviria</taxon>
        <taxon>Heunggongvirae</taxon>
        <taxon>Peploviricota</taxon>
        <taxon>Herviviricetes</taxon>
        <taxon>Herpesvirales</taxon>
        <taxon>Orthoherpesviridae</taxon>
        <taxon>Alphaherpesvirinae</taxon>
        <taxon>Mardivirus</taxon>
        <taxon>Mardivirus gallidalpha2</taxon>
        <taxon>Gallid alphaherpesvirus 2</taxon>
    </lineage>
</organism>
<name>GL_GAHVG</name>
<comment type="function">
    <text evidence="1">The heterodimer glycoprotein H-glycoprotein L is required for the fusion of viral and plasma membranes leading to virus entry into the host cell. Acts as a functional inhibitor of gH and maintains gH in an inhibited form. Upon binding to host integrins, gL dissociates from gH leading to activation of the viral fusion glycoproteins gB and gH.</text>
</comment>
<comment type="subunit">
    <text evidence="1">Interacts with glycoprotein H (gH); this interaction is necessary for the correct processing and cell surface expression of gH. The heterodimer gH/gL seems to interact with gB trimers during fusion.</text>
</comment>
<comment type="subcellular location">
    <subcellularLocation>
        <location evidence="1">Virion membrane</location>
        <topology evidence="1">Peripheral membrane protein</topology>
        <orientation evidence="1">Extracellular side</orientation>
    </subcellularLocation>
    <subcellularLocation>
        <location evidence="1">Host cell membrane</location>
        <topology evidence="1">Peripheral membrane protein</topology>
        <orientation evidence="1">Extracellular side</orientation>
    </subcellularLocation>
    <subcellularLocation>
        <location evidence="1">Host Golgi apparatus</location>
        <location evidence="1">Host trans-Golgi network</location>
    </subcellularLocation>
    <text evidence="1">gL associates with the extravirion surface through its binding to gH. During virion morphogenesis, this protein probably accumulates in the host trans-Golgi where secondary envelopment occurs.</text>
</comment>
<comment type="similarity">
    <text evidence="2">Belongs to the herpesviridae glycoprotein L (gL) family. Alphaherpesvirinae gL subfamily.</text>
</comment>